<sequence length="505" mass="54765">MSQHVMFNAVLSSHPALFIQGEWRIGNGVSFEKQDPMSQQRLWQARAADHTDVTLACHAARAAFPAWARASLEQRATVIQQFAALLEQHKQSLARTISLETSKPYWETLTEVQAMIGKVAISLQAYQTRTGHSQTPMGDSMSVLRHRPHGVLAVFGPYNFPGHLPNGHIVPALLAGNTVVFKPSELTPWTAEETVKLWQQAGIPDGVLNLVQGGRETGEALAAQPDIDGLLFTGSAHTGYHLHRQLAGQPEKMLALEMGGNNALIVEQVKDRDAVVNLAIQSAFISAGQRCTCSRRLLVKTGAEGDAFLLRFTAVAQALRIGRWDEQPAPFMGAVISSQAAERMLAAQQHLLLLGGESLLNMTRPDSQSALLTPGIIDITNISEVPDEEYFGPLVSVIRYTDFTEALKIANQTRFGLAVGLVSEDRQQFEQLLLEARAGIVNWNKPLTGASSAAPFGGVGASGNHRPSAFYAADYCAWPMASLECEHLTLPATLSPGISFDLPKV</sequence>
<proteinExistence type="inferred from homology"/>
<feature type="chain" id="PRO_1000138067" description="N-succinylglutamate 5-semialdehyde dehydrogenase">
    <location>
        <begin position="1"/>
        <end position="505"/>
    </location>
</feature>
<feature type="active site" evidence="1">
    <location>
        <position position="257"/>
    </location>
</feature>
<feature type="active site" evidence="1">
    <location>
        <position position="291"/>
    </location>
</feature>
<feature type="binding site" evidence="1">
    <location>
        <begin position="234"/>
        <end position="239"/>
    </location>
    <ligand>
        <name>NAD(+)</name>
        <dbReference type="ChEBI" id="CHEBI:57540"/>
    </ligand>
</feature>
<gene>
    <name evidence="1" type="primary">astD</name>
    <name type="ordered locus">YPK_2227</name>
</gene>
<evidence type="ECO:0000255" key="1">
    <source>
        <dbReference type="HAMAP-Rule" id="MF_01174"/>
    </source>
</evidence>
<reference key="1">
    <citation type="submission" date="2008-02" db="EMBL/GenBank/DDBJ databases">
        <title>Complete sequence of Yersinia pseudotuberculosis YPIII.</title>
        <authorList>
            <consortium name="US DOE Joint Genome Institute"/>
            <person name="Copeland A."/>
            <person name="Lucas S."/>
            <person name="Lapidus A."/>
            <person name="Glavina del Rio T."/>
            <person name="Dalin E."/>
            <person name="Tice H."/>
            <person name="Bruce D."/>
            <person name="Goodwin L."/>
            <person name="Pitluck S."/>
            <person name="Munk A.C."/>
            <person name="Brettin T."/>
            <person name="Detter J.C."/>
            <person name="Han C."/>
            <person name="Tapia R."/>
            <person name="Schmutz J."/>
            <person name="Larimer F."/>
            <person name="Land M."/>
            <person name="Hauser L."/>
            <person name="Challacombe J.F."/>
            <person name="Green L."/>
            <person name="Lindler L.E."/>
            <person name="Nikolich M.P."/>
            <person name="Richardson P."/>
        </authorList>
    </citation>
    <scope>NUCLEOTIDE SEQUENCE [LARGE SCALE GENOMIC DNA]</scope>
    <source>
        <strain>YPIII</strain>
    </source>
</reference>
<comment type="function">
    <text evidence="1">Catalyzes the NAD-dependent reduction of succinylglutamate semialdehyde into succinylglutamate.</text>
</comment>
<comment type="catalytic activity">
    <reaction evidence="1">
        <text>N-succinyl-L-glutamate 5-semialdehyde + NAD(+) + H2O = N-succinyl-L-glutamate + NADH + 2 H(+)</text>
        <dbReference type="Rhea" id="RHEA:10812"/>
        <dbReference type="ChEBI" id="CHEBI:15377"/>
        <dbReference type="ChEBI" id="CHEBI:15378"/>
        <dbReference type="ChEBI" id="CHEBI:57540"/>
        <dbReference type="ChEBI" id="CHEBI:57945"/>
        <dbReference type="ChEBI" id="CHEBI:58520"/>
        <dbReference type="ChEBI" id="CHEBI:58763"/>
        <dbReference type="EC" id="1.2.1.71"/>
    </reaction>
</comment>
<comment type="pathway">
    <text evidence="1">Amino-acid degradation; L-arginine degradation via AST pathway; L-glutamate and succinate from L-arginine: step 4/5.</text>
</comment>
<comment type="similarity">
    <text evidence="1">Belongs to the aldehyde dehydrogenase family. AstD subfamily.</text>
</comment>
<organism>
    <name type="scientific">Yersinia pseudotuberculosis serotype O:3 (strain YPIII)</name>
    <dbReference type="NCBI Taxonomy" id="502800"/>
    <lineage>
        <taxon>Bacteria</taxon>
        <taxon>Pseudomonadati</taxon>
        <taxon>Pseudomonadota</taxon>
        <taxon>Gammaproteobacteria</taxon>
        <taxon>Enterobacterales</taxon>
        <taxon>Yersiniaceae</taxon>
        <taxon>Yersinia</taxon>
    </lineage>
</organism>
<accession>B1JMD1</accession>
<dbReference type="EC" id="1.2.1.71" evidence="1"/>
<dbReference type="EMBL" id="CP000950">
    <property type="protein sequence ID" value="ACA68508.1"/>
    <property type="molecule type" value="Genomic_DNA"/>
</dbReference>
<dbReference type="RefSeq" id="WP_002212030.1">
    <property type="nucleotide sequence ID" value="NZ_CP009792.1"/>
</dbReference>
<dbReference type="SMR" id="B1JMD1"/>
<dbReference type="KEGG" id="ypy:YPK_2227"/>
<dbReference type="UniPathway" id="UPA00185">
    <property type="reaction ID" value="UER00282"/>
</dbReference>
<dbReference type="GO" id="GO:0043824">
    <property type="term" value="F:succinylglutamate-semialdehyde dehydrogenase activity"/>
    <property type="evidence" value="ECO:0007669"/>
    <property type="project" value="UniProtKB-EC"/>
</dbReference>
<dbReference type="GO" id="GO:0019544">
    <property type="term" value="P:arginine catabolic process to glutamate"/>
    <property type="evidence" value="ECO:0007669"/>
    <property type="project" value="UniProtKB-UniRule"/>
</dbReference>
<dbReference type="GO" id="GO:0019545">
    <property type="term" value="P:arginine catabolic process to succinate"/>
    <property type="evidence" value="ECO:0007669"/>
    <property type="project" value="UniProtKB-UniRule"/>
</dbReference>
<dbReference type="CDD" id="cd07095">
    <property type="entry name" value="ALDH_SGSD_AstD"/>
    <property type="match status" value="1"/>
</dbReference>
<dbReference type="FunFam" id="3.40.309.10:FF:000013">
    <property type="entry name" value="N-succinylglutamate 5-semialdehyde dehydrogenase"/>
    <property type="match status" value="1"/>
</dbReference>
<dbReference type="FunFam" id="3.40.605.10:FF:000010">
    <property type="entry name" value="N-succinylglutamate 5-semialdehyde dehydrogenase"/>
    <property type="match status" value="1"/>
</dbReference>
<dbReference type="Gene3D" id="3.40.605.10">
    <property type="entry name" value="Aldehyde Dehydrogenase, Chain A, domain 1"/>
    <property type="match status" value="1"/>
</dbReference>
<dbReference type="Gene3D" id="3.40.309.10">
    <property type="entry name" value="Aldehyde Dehydrogenase, Chain A, domain 2"/>
    <property type="match status" value="1"/>
</dbReference>
<dbReference type="HAMAP" id="MF_01174">
    <property type="entry name" value="Aldedh_AstD"/>
    <property type="match status" value="1"/>
</dbReference>
<dbReference type="InterPro" id="IPR016161">
    <property type="entry name" value="Ald_DH/histidinol_DH"/>
</dbReference>
<dbReference type="InterPro" id="IPR016163">
    <property type="entry name" value="Ald_DH_C"/>
</dbReference>
<dbReference type="InterPro" id="IPR016160">
    <property type="entry name" value="Ald_DH_CS_CYS"/>
</dbReference>
<dbReference type="InterPro" id="IPR029510">
    <property type="entry name" value="Ald_DH_CS_GLU"/>
</dbReference>
<dbReference type="InterPro" id="IPR016162">
    <property type="entry name" value="Ald_DH_N"/>
</dbReference>
<dbReference type="InterPro" id="IPR015590">
    <property type="entry name" value="Aldehyde_DH_dom"/>
</dbReference>
<dbReference type="InterPro" id="IPR017649">
    <property type="entry name" value="SuccinylGlu_semiald_DH_AstD"/>
</dbReference>
<dbReference type="NCBIfam" id="TIGR03240">
    <property type="entry name" value="arg_catab_astD"/>
    <property type="match status" value="1"/>
</dbReference>
<dbReference type="NCBIfam" id="NF006992">
    <property type="entry name" value="PRK09457.1"/>
    <property type="match status" value="1"/>
</dbReference>
<dbReference type="PANTHER" id="PTHR11699">
    <property type="entry name" value="ALDEHYDE DEHYDROGENASE-RELATED"/>
    <property type="match status" value="1"/>
</dbReference>
<dbReference type="Pfam" id="PF00171">
    <property type="entry name" value="Aldedh"/>
    <property type="match status" value="1"/>
</dbReference>
<dbReference type="SUPFAM" id="SSF53720">
    <property type="entry name" value="ALDH-like"/>
    <property type="match status" value="1"/>
</dbReference>
<dbReference type="PROSITE" id="PS00070">
    <property type="entry name" value="ALDEHYDE_DEHYDR_CYS"/>
    <property type="match status" value="1"/>
</dbReference>
<dbReference type="PROSITE" id="PS00687">
    <property type="entry name" value="ALDEHYDE_DEHYDR_GLU"/>
    <property type="match status" value="1"/>
</dbReference>
<protein>
    <recommendedName>
        <fullName evidence="1">N-succinylglutamate 5-semialdehyde dehydrogenase</fullName>
        <ecNumber evidence="1">1.2.1.71</ecNumber>
    </recommendedName>
    <alternativeName>
        <fullName evidence="1">Succinylglutamic semialdehyde dehydrogenase</fullName>
        <shortName evidence="1">SGSD</shortName>
    </alternativeName>
</protein>
<keyword id="KW-0056">Arginine metabolism</keyword>
<keyword id="KW-0520">NAD</keyword>
<keyword id="KW-0560">Oxidoreductase</keyword>
<name>ASTD_YERPY</name>